<organism>
    <name type="scientific">Burkholderia ambifaria (strain MC40-6)</name>
    <dbReference type="NCBI Taxonomy" id="398577"/>
    <lineage>
        <taxon>Bacteria</taxon>
        <taxon>Pseudomonadati</taxon>
        <taxon>Pseudomonadota</taxon>
        <taxon>Betaproteobacteria</taxon>
        <taxon>Burkholderiales</taxon>
        <taxon>Burkholderiaceae</taxon>
        <taxon>Burkholderia</taxon>
        <taxon>Burkholderia cepacia complex</taxon>
    </lineage>
</organism>
<sequence length="373" mass="39413">MPDPILLTPGPLTTSATTRHAMQHDWGSWDAAFNQLTASVCADLVAIARGGDEYVCVPMQGSGTFSVEAALGTLVPRDGVVLVPDNGAYCARILKILGRLGVEAIALPFGEDAAVDPAAVEAAFAREPRITHVALVHLETSAGILNPLDAIAAMCRQHGRRLIVDAMSSFGALPIALADSGIDALVSASGKCLEGVPGMGFAIVRRDALDACEGNSPSLALDLQDQHAYLRKTGQWRFTPPTHVIAALRAALDQYLAEGGQPARGARYAENCRTLVESMRALGFAPFLDASVQAPVIVTFHAPDHPAYDFRRFYDAVRDAGFILYPGKLTKVETFRVGCIGAIDAGDIRRAVAAIAQALESLGIAMQRVSADA</sequence>
<proteinExistence type="inferred from homology"/>
<protein>
    <recommendedName>
        <fullName evidence="1">2-aminoethylphosphonate--pyruvate transaminase</fullName>
        <ecNumber evidence="1">2.6.1.37</ecNumber>
    </recommendedName>
    <alternativeName>
        <fullName evidence="1">2-aminoethylphosphonate aminotransferase</fullName>
    </alternativeName>
    <alternativeName>
        <fullName evidence="1">AEP transaminase</fullName>
        <shortName evidence="1">AEPT</shortName>
    </alternativeName>
</protein>
<gene>
    <name evidence="1" type="primary">phnW</name>
    <name type="ordered locus">BamMC406_5190</name>
</gene>
<name>PHNW_BURA4</name>
<feature type="chain" id="PRO_1000144850" description="2-aminoethylphosphonate--pyruvate transaminase">
    <location>
        <begin position="1"/>
        <end position="373"/>
    </location>
</feature>
<feature type="modified residue" description="N6-(pyridoxal phosphate)lysine" evidence="1">
    <location>
        <position position="191"/>
    </location>
</feature>
<accession>B1Z0T3</accession>
<dbReference type="EC" id="2.6.1.37" evidence="1"/>
<dbReference type="EMBL" id="CP001026">
    <property type="protein sequence ID" value="ACB67635.1"/>
    <property type="molecule type" value="Genomic_DNA"/>
</dbReference>
<dbReference type="RefSeq" id="WP_012366878.1">
    <property type="nucleotide sequence ID" value="NC_010552.1"/>
</dbReference>
<dbReference type="SMR" id="B1Z0T3"/>
<dbReference type="KEGG" id="bac:BamMC406_5190"/>
<dbReference type="HOGENOM" id="CLU_027686_3_1_4"/>
<dbReference type="OrthoDB" id="9766472at2"/>
<dbReference type="Proteomes" id="UP000001680">
    <property type="component" value="Chromosome 2"/>
</dbReference>
<dbReference type="GO" id="GO:0047304">
    <property type="term" value="F:2-aminoethylphosphonate-pyruvate transaminase activity"/>
    <property type="evidence" value="ECO:0007669"/>
    <property type="project" value="UniProtKB-UniRule"/>
</dbReference>
<dbReference type="GO" id="GO:0019700">
    <property type="term" value="P:organic phosphonate catabolic process"/>
    <property type="evidence" value="ECO:0007669"/>
    <property type="project" value="InterPro"/>
</dbReference>
<dbReference type="Gene3D" id="3.90.1150.10">
    <property type="entry name" value="Aspartate Aminotransferase, domain 1"/>
    <property type="match status" value="1"/>
</dbReference>
<dbReference type="Gene3D" id="3.40.640.10">
    <property type="entry name" value="Type I PLP-dependent aspartate aminotransferase-like (Major domain)"/>
    <property type="match status" value="1"/>
</dbReference>
<dbReference type="HAMAP" id="MF_01376">
    <property type="entry name" value="PhnW_aminotrans_5"/>
    <property type="match status" value="1"/>
</dbReference>
<dbReference type="InterPro" id="IPR000192">
    <property type="entry name" value="Aminotrans_V_dom"/>
</dbReference>
<dbReference type="InterPro" id="IPR012703">
    <property type="entry name" value="NH2EtPonate_pyrv_transaminase"/>
</dbReference>
<dbReference type="InterPro" id="IPR015424">
    <property type="entry name" value="PyrdxlP-dep_Trfase"/>
</dbReference>
<dbReference type="InterPro" id="IPR015421">
    <property type="entry name" value="PyrdxlP-dep_Trfase_major"/>
</dbReference>
<dbReference type="InterPro" id="IPR015422">
    <property type="entry name" value="PyrdxlP-dep_Trfase_small"/>
</dbReference>
<dbReference type="InterPro" id="IPR024169">
    <property type="entry name" value="SP_NH2Trfase/AEP_transaminase"/>
</dbReference>
<dbReference type="NCBIfam" id="TIGR03301">
    <property type="entry name" value="PhnW-AepZ"/>
    <property type="match status" value="1"/>
</dbReference>
<dbReference type="NCBIfam" id="NF010006">
    <property type="entry name" value="PRK13479.1"/>
    <property type="match status" value="1"/>
</dbReference>
<dbReference type="NCBIfam" id="TIGR02326">
    <property type="entry name" value="transamin_PhnW"/>
    <property type="match status" value="1"/>
</dbReference>
<dbReference type="PANTHER" id="PTHR42778">
    <property type="entry name" value="2-AMINOETHYLPHOSPHONATE--PYRUVATE TRANSAMINASE"/>
    <property type="match status" value="1"/>
</dbReference>
<dbReference type="PANTHER" id="PTHR42778:SF1">
    <property type="entry name" value="2-AMINOETHYLPHOSPHONATE--PYRUVATE TRANSAMINASE"/>
    <property type="match status" value="1"/>
</dbReference>
<dbReference type="Pfam" id="PF00266">
    <property type="entry name" value="Aminotran_5"/>
    <property type="match status" value="1"/>
</dbReference>
<dbReference type="PIRSF" id="PIRSF000524">
    <property type="entry name" value="SPT"/>
    <property type="match status" value="1"/>
</dbReference>
<dbReference type="SUPFAM" id="SSF53383">
    <property type="entry name" value="PLP-dependent transferases"/>
    <property type="match status" value="1"/>
</dbReference>
<keyword id="KW-0032">Aminotransferase</keyword>
<keyword id="KW-0663">Pyridoxal phosphate</keyword>
<keyword id="KW-0670">Pyruvate</keyword>
<keyword id="KW-0808">Transferase</keyword>
<reference key="1">
    <citation type="submission" date="2008-04" db="EMBL/GenBank/DDBJ databases">
        <title>Complete sequence of chromosome 2 of Burkholderia ambifaria MC40-6.</title>
        <authorList>
            <person name="Copeland A."/>
            <person name="Lucas S."/>
            <person name="Lapidus A."/>
            <person name="Glavina del Rio T."/>
            <person name="Dalin E."/>
            <person name="Tice H."/>
            <person name="Pitluck S."/>
            <person name="Chain P."/>
            <person name="Malfatti S."/>
            <person name="Shin M."/>
            <person name="Vergez L."/>
            <person name="Lang D."/>
            <person name="Schmutz J."/>
            <person name="Larimer F."/>
            <person name="Land M."/>
            <person name="Hauser L."/>
            <person name="Kyrpides N."/>
            <person name="Lykidis A."/>
            <person name="Ramette A."/>
            <person name="Konstantinidis K."/>
            <person name="Tiedje J."/>
            <person name="Richardson P."/>
        </authorList>
    </citation>
    <scope>NUCLEOTIDE SEQUENCE [LARGE SCALE GENOMIC DNA]</scope>
    <source>
        <strain>MC40-6</strain>
    </source>
</reference>
<evidence type="ECO:0000255" key="1">
    <source>
        <dbReference type="HAMAP-Rule" id="MF_01376"/>
    </source>
</evidence>
<comment type="function">
    <text evidence="1">Involved in phosphonate degradation.</text>
</comment>
<comment type="catalytic activity">
    <reaction evidence="1">
        <text>(2-aminoethyl)phosphonate + pyruvate = phosphonoacetaldehyde + L-alanine</text>
        <dbReference type="Rhea" id="RHEA:17021"/>
        <dbReference type="ChEBI" id="CHEBI:15361"/>
        <dbReference type="ChEBI" id="CHEBI:57418"/>
        <dbReference type="ChEBI" id="CHEBI:57972"/>
        <dbReference type="ChEBI" id="CHEBI:58383"/>
        <dbReference type="EC" id="2.6.1.37"/>
    </reaction>
</comment>
<comment type="cofactor">
    <cofactor evidence="1">
        <name>pyridoxal 5'-phosphate</name>
        <dbReference type="ChEBI" id="CHEBI:597326"/>
    </cofactor>
</comment>
<comment type="subunit">
    <text evidence="1">Homodimer.</text>
</comment>
<comment type="similarity">
    <text evidence="1">Belongs to the class-V pyridoxal-phosphate-dependent aminotransferase family. PhnW subfamily.</text>
</comment>